<evidence type="ECO:0000255" key="1">
    <source>
        <dbReference type="HAMAP-Rule" id="MF_00758"/>
    </source>
</evidence>
<comment type="similarity">
    <text evidence="1">Belongs to the UPF0301 (AlgH) family.</text>
</comment>
<name>Y1330_SHESW</name>
<protein>
    <recommendedName>
        <fullName evidence="1">UPF0301 protein Sputw3181_1330</fullName>
    </recommendedName>
</protein>
<accession>A1RHM8</accession>
<feature type="chain" id="PRO_1000046686" description="UPF0301 protein Sputw3181_1330">
    <location>
        <begin position="1"/>
        <end position="187"/>
    </location>
</feature>
<sequence>MESLQNHFLIAMPSLDDTFFERSVIYLCEHDDKGAMGIVINKPLGIEVSSLLEQMDLPAEQVFADIAQNAQVLMGGPVSQDRGFVLHTSQPYWANSTDLGSGLMLTTSRDVLTAIGGKRSPDKFLVALGYAGWGKHQLEQELAENSWLTIPATNALLFDVKHEDRWPQASRSLGFDAWQVSAQAGHA</sequence>
<dbReference type="EMBL" id="CP000503">
    <property type="protein sequence ID" value="ABM24173.1"/>
    <property type="molecule type" value="Genomic_DNA"/>
</dbReference>
<dbReference type="RefSeq" id="WP_011788679.1">
    <property type="nucleotide sequence ID" value="NC_008750.1"/>
</dbReference>
<dbReference type="SMR" id="A1RHM8"/>
<dbReference type="KEGG" id="shw:Sputw3181_1330"/>
<dbReference type="HOGENOM" id="CLU_057596_1_0_6"/>
<dbReference type="Proteomes" id="UP000002597">
    <property type="component" value="Chromosome"/>
</dbReference>
<dbReference type="GO" id="GO:0005829">
    <property type="term" value="C:cytosol"/>
    <property type="evidence" value="ECO:0007669"/>
    <property type="project" value="TreeGrafter"/>
</dbReference>
<dbReference type="Gene3D" id="3.40.1740.10">
    <property type="entry name" value="VC0467-like"/>
    <property type="match status" value="1"/>
</dbReference>
<dbReference type="Gene3D" id="3.30.70.1300">
    <property type="entry name" value="VC0467-like domains"/>
    <property type="match status" value="1"/>
</dbReference>
<dbReference type="HAMAP" id="MF_00758">
    <property type="entry name" value="UPF0301"/>
    <property type="match status" value="1"/>
</dbReference>
<dbReference type="InterPro" id="IPR003774">
    <property type="entry name" value="AlgH-like"/>
</dbReference>
<dbReference type="NCBIfam" id="NF001266">
    <property type="entry name" value="PRK00228.1-1"/>
    <property type="match status" value="1"/>
</dbReference>
<dbReference type="PANTHER" id="PTHR30327">
    <property type="entry name" value="UNCHARACTERIZED PROTEIN YQGE"/>
    <property type="match status" value="1"/>
</dbReference>
<dbReference type="PANTHER" id="PTHR30327:SF1">
    <property type="entry name" value="UPF0301 PROTEIN YQGE"/>
    <property type="match status" value="1"/>
</dbReference>
<dbReference type="Pfam" id="PF02622">
    <property type="entry name" value="DUF179"/>
    <property type="match status" value="1"/>
</dbReference>
<dbReference type="SUPFAM" id="SSF143456">
    <property type="entry name" value="VC0467-like"/>
    <property type="match status" value="1"/>
</dbReference>
<proteinExistence type="inferred from homology"/>
<organism>
    <name type="scientific">Shewanella sp. (strain W3-18-1)</name>
    <dbReference type="NCBI Taxonomy" id="351745"/>
    <lineage>
        <taxon>Bacteria</taxon>
        <taxon>Pseudomonadati</taxon>
        <taxon>Pseudomonadota</taxon>
        <taxon>Gammaproteobacteria</taxon>
        <taxon>Alteromonadales</taxon>
        <taxon>Shewanellaceae</taxon>
        <taxon>Shewanella</taxon>
    </lineage>
</organism>
<gene>
    <name type="ordered locus">Sputw3181_1330</name>
</gene>
<reference key="1">
    <citation type="submission" date="2006-12" db="EMBL/GenBank/DDBJ databases">
        <title>Complete sequence of Shewanella sp. W3-18-1.</title>
        <authorList>
            <consortium name="US DOE Joint Genome Institute"/>
            <person name="Copeland A."/>
            <person name="Lucas S."/>
            <person name="Lapidus A."/>
            <person name="Barry K."/>
            <person name="Detter J.C."/>
            <person name="Glavina del Rio T."/>
            <person name="Hammon N."/>
            <person name="Israni S."/>
            <person name="Dalin E."/>
            <person name="Tice H."/>
            <person name="Pitluck S."/>
            <person name="Chain P."/>
            <person name="Malfatti S."/>
            <person name="Shin M."/>
            <person name="Vergez L."/>
            <person name="Schmutz J."/>
            <person name="Larimer F."/>
            <person name="Land M."/>
            <person name="Hauser L."/>
            <person name="Kyrpides N."/>
            <person name="Lykidis A."/>
            <person name="Tiedje J."/>
            <person name="Richardson P."/>
        </authorList>
    </citation>
    <scope>NUCLEOTIDE SEQUENCE [LARGE SCALE GENOMIC DNA]</scope>
    <source>
        <strain>W3-18-1</strain>
    </source>
</reference>